<sequence>MASPSKKVVRKKKEKKNIPNGVAHIQATFNNTIITITDPVGNVVAWSSAGSKGFKGSRKSTPFAAQIAAEECARKAQEHGMRSVEVFVKGPGSGRESALRALQAAGFHVNFIRDVTPIPHNGCRPPKRRRV</sequence>
<dbReference type="EMBL" id="AE017180">
    <property type="protein sequence ID" value="AAR36226.1"/>
    <property type="molecule type" value="Genomic_DNA"/>
</dbReference>
<dbReference type="RefSeq" id="NP_953876.1">
    <property type="nucleotide sequence ID" value="NC_002939.5"/>
</dbReference>
<dbReference type="RefSeq" id="WP_010943461.1">
    <property type="nucleotide sequence ID" value="NC_002939.5"/>
</dbReference>
<dbReference type="SMR" id="Q749B1"/>
<dbReference type="FunCoup" id="Q749B1">
    <property type="interactions" value="589"/>
</dbReference>
<dbReference type="STRING" id="243231.GSU2833"/>
<dbReference type="EnsemblBacteria" id="AAR36226">
    <property type="protein sequence ID" value="AAR36226"/>
    <property type="gene ID" value="GSU2833"/>
</dbReference>
<dbReference type="KEGG" id="gsu:GSU2833"/>
<dbReference type="PATRIC" id="fig|243231.5.peg.2858"/>
<dbReference type="eggNOG" id="COG0100">
    <property type="taxonomic scope" value="Bacteria"/>
</dbReference>
<dbReference type="HOGENOM" id="CLU_072439_5_0_7"/>
<dbReference type="InParanoid" id="Q749B1"/>
<dbReference type="OrthoDB" id="9806415at2"/>
<dbReference type="Proteomes" id="UP000000577">
    <property type="component" value="Chromosome"/>
</dbReference>
<dbReference type="GO" id="GO:0022627">
    <property type="term" value="C:cytosolic small ribosomal subunit"/>
    <property type="evidence" value="ECO:0000318"/>
    <property type="project" value="GO_Central"/>
</dbReference>
<dbReference type="GO" id="GO:0019843">
    <property type="term" value="F:rRNA binding"/>
    <property type="evidence" value="ECO:0007669"/>
    <property type="project" value="UniProtKB-UniRule"/>
</dbReference>
<dbReference type="GO" id="GO:0003735">
    <property type="term" value="F:structural constituent of ribosome"/>
    <property type="evidence" value="ECO:0000318"/>
    <property type="project" value="GO_Central"/>
</dbReference>
<dbReference type="GO" id="GO:0006412">
    <property type="term" value="P:translation"/>
    <property type="evidence" value="ECO:0000318"/>
    <property type="project" value="GO_Central"/>
</dbReference>
<dbReference type="FunFam" id="3.30.420.80:FF:000001">
    <property type="entry name" value="30S ribosomal protein S11"/>
    <property type="match status" value="1"/>
</dbReference>
<dbReference type="Gene3D" id="3.30.420.80">
    <property type="entry name" value="Ribosomal protein S11"/>
    <property type="match status" value="1"/>
</dbReference>
<dbReference type="HAMAP" id="MF_01310">
    <property type="entry name" value="Ribosomal_uS11"/>
    <property type="match status" value="1"/>
</dbReference>
<dbReference type="InterPro" id="IPR001971">
    <property type="entry name" value="Ribosomal_uS11"/>
</dbReference>
<dbReference type="InterPro" id="IPR019981">
    <property type="entry name" value="Ribosomal_uS11_bac-type"/>
</dbReference>
<dbReference type="InterPro" id="IPR018102">
    <property type="entry name" value="Ribosomal_uS11_CS"/>
</dbReference>
<dbReference type="InterPro" id="IPR036967">
    <property type="entry name" value="Ribosomal_uS11_sf"/>
</dbReference>
<dbReference type="NCBIfam" id="NF003698">
    <property type="entry name" value="PRK05309.1"/>
    <property type="match status" value="1"/>
</dbReference>
<dbReference type="NCBIfam" id="TIGR03632">
    <property type="entry name" value="uS11_bact"/>
    <property type="match status" value="1"/>
</dbReference>
<dbReference type="PANTHER" id="PTHR11759">
    <property type="entry name" value="40S RIBOSOMAL PROTEIN S14/30S RIBOSOMAL PROTEIN S11"/>
    <property type="match status" value="1"/>
</dbReference>
<dbReference type="Pfam" id="PF00411">
    <property type="entry name" value="Ribosomal_S11"/>
    <property type="match status" value="1"/>
</dbReference>
<dbReference type="PIRSF" id="PIRSF002131">
    <property type="entry name" value="Ribosomal_S11"/>
    <property type="match status" value="1"/>
</dbReference>
<dbReference type="SUPFAM" id="SSF53137">
    <property type="entry name" value="Translational machinery components"/>
    <property type="match status" value="1"/>
</dbReference>
<dbReference type="PROSITE" id="PS00054">
    <property type="entry name" value="RIBOSOMAL_S11"/>
    <property type="match status" value="1"/>
</dbReference>
<protein>
    <recommendedName>
        <fullName evidence="1">Small ribosomal subunit protein uS11</fullName>
    </recommendedName>
    <alternativeName>
        <fullName evidence="2">30S ribosomal protein S11</fullName>
    </alternativeName>
</protein>
<gene>
    <name evidence="1" type="primary">rpsK</name>
    <name type="ordered locus">GSU2833</name>
</gene>
<feature type="chain" id="PRO_0000123152" description="Small ribosomal subunit protein uS11">
    <location>
        <begin position="1"/>
        <end position="131"/>
    </location>
</feature>
<organism>
    <name type="scientific">Geobacter sulfurreducens (strain ATCC 51573 / DSM 12127 / PCA)</name>
    <dbReference type="NCBI Taxonomy" id="243231"/>
    <lineage>
        <taxon>Bacteria</taxon>
        <taxon>Pseudomonadati</taxon>
        <taxon>Thermodesulfobacteriota</taxon>
        <taxon>Desulfuromonadia</taxon>
        <taxon>Geobacterales</taxon>
        <taxon>Geobacteraceae</taxon>
        <taxon>Geobacter</taxon>
    </lineage>
</organism>
<proteinExistence type="inferred from homology"/>
<reference key="1">
    <citation type="journal article" date="2003" name="Science">
        <title>Genome of Geobacter sulfurreducens: metal reduction in subsurface environments.</title>
        <authorList>
            <person name="Methe B.A."/>
            <person name="Nelson K.E."/>
            <person name="Eisen J.A."/>
            <person name="Paulsen I.T."/>
            <person name="Nelson W.C."/>
            <person name="Heidelberg J.F."/>
            <person name="Wu D."/>
            <person name="Wu M."/>
            <person name="Ward N.L."/>
            <person name="Beanan M.J."/>
            <person name="Dodson R.J."/>
            <person name="Madupu R."/>
            <person name="Brinkac L.M."/>
            <person name="Daugherty S.C."/>
            <person name="DeBoy R.T."/>
            <person name="Durkin A.S."/>
            <person name="Gwinn M.L."/>
            <person name="Kolonay J.F."/>
            <person name="Sullivan S.A."/>
            <person name="Haft D.H."/>
            <person name="Selengut J."/>
            <person name="Davidsen T.M."/>
            <person name="Zafar N."/>
            <person name="White O."/>
            <person name="Tran B."/>
            <person name="Romero C."/>
            <person name="Forberger H.A."/>
            <person name="Weidman J.F."/>
            <person name="Khouri H.M."/>
            <person name="Feldblyum T.V."/>
            <person name="Utterback T.R."/>
            <person name="Van Aken S.E."/>
            <person name="Lovley D.R."/>
            <person name="Fraser C.M."/>
        </authorList>
    </citation>
    <scope>NUCLEOTIDE SEQUENCE [LARGE SCALE GENOMIC DNA]</scope>
    <source>
        <strain>ATCC 51573 / DSM 12127 / PCA</strain>
    </source>
</reference>
<evidence type="ECO:0000255" key="1">
    <source>
        <dbReference type="HAMAP-Rule" id="MF_01310"/>
    </source>
</evidence>
<evidence type="ECO:0000305" key="2"/>
<keyword id="KW-1185">Reference proteome</keyword>
<keyword id="KW-0687">Ribonucleoprotein</keyword>
<keyword id="KW-0689">Ribosomal protein</keyword>
<keyword id="KW-0694">RNA-binding</keyword>
<keyword id="KW-0699">rRNA-binding</keyword>
<comment type="function">
    <text evidence="1">Located on the platform of the 30S subunit, it bridges several disparate RNA helices of the 16S rRNA. Forms part of the Shine-Dalgarno cleft in the 70S ribosome.</text>
</comment>
<comment type="subunit">
    <text evidence="1">Part of the 30S ribosomal subunit. Interacts with proteins S7 and S18. Binds to IF-3.</text>
</comment>
<comment type="similarity">
    <text evidence="1">Belongs to the universal ribosomal protein uS11 family.</text>
</comment>
<accession>Q749B1</accession>
<name>RS11_GEOSL</name>